<comment type="function">
    <text>Mitochondrial membrane ATP synthase (F(1)F(0) ATP synthase or Complex V) produces ATP from ADP in the presence of a proton gradient across the membrane which is generated by electron transport complexes of the respiratory chain. F-type ATPases consist of two structural domains, F(1) - containing the extramembraneous catalytic core, and F(0) - containing the membrane proton channel, linked together by a central stalk and a peripheral stalk. During catalysis, ATP synthesis in the catalytic domain of F(1) is coupled via a rotary mechanism of the central stalk subunits to proton translocation. Part of the complex F(1) domain and the central stalk which is part of the complex rotary element. The gamma subunit protrudes into the catalytic domain formed of alpha(3)beta(3). Rotation of the central stalk against the surrounding alpha(3)beta(3) subunits leads to hydrolysis of ATP in three separate catalytic sites on the beta subunits.</text>
</comment>
<comment type="subunit">
    <text evidence="1">F-type ATPases have 2 components, CF(1) - the catalytic core - and CF(0) - the membrane proton channel. CF(1) has five subunits: alpha(3), beta(3), gamma(1), delta(1), epsilon(1). CF(0) has three main subunits: a, b and c (By similarity).</text>
</comment>
<comment type="subcellular location">
    <subcellularLocation>
        <location>Mitochondrion</location>
    </subcellularLocation>
    <subcellularLocation>
        <location evidence="1">Mitochondrion inner membrane</location>
        <topology evidence="1">Peripheral membrane protein</topology>
    </subcellularLocation>
</comment>
<comment type="similarity">
    <text evidence="3">Belongs to the ATPase gamma chain family.</text>
</comment>
<protein>
    <recommendedName>
        <fullName>ATP synthase subunit gamma, mitochondrial</fullName>
    </recommendedName>
    <alternativeName>
        <fullName>F-ATPase gamma subunit</fullName>
    </alternativeName>
</protein>
<feature type="transit peptide" description="Mitochondrion" evidence="2">
    <location>
        <begin position="1"/>
        <end status="unknown"/>
    </location>
</feature>
<feature type="chain" id="PRO_0000002690" description="ATP synthase subunit gamma, mitochondrial">
    <location>
        <begin status="unknown"/>
        <end position="301"/>
    </location>
</feature>
<reference key="1">
    <citation type="journal article" date="2002" name="Nature">
        <title>The genome sequence of Schizosaccharomyces pombe.</title>
        <authorList>
            <person name="Wood V."/>
            <person name="Gwilliam R."/>
            <person name="Rajandream M.A."/>
            <person name="Lyne M.H."/>
            <person name="Lyne R."/>
            <person name="Stewart A."/>
            <person name="Sgouros J.G."/>
            <person name="Peat N."/>
            <person name="Hayles J."/>
            <person name="Baker S.G."/>
            <person name="Basham D."/>
            <person name="Bowman S."/>
            <person name="Brooks K."/>
            <person name="Brown D."/>
            <person name="Brown S."/>
            <person name="Chillingworth T."/>
            <person name="Churcher C.M."/>
            <person name="Collins M."/>
            <person name="Connor R."/>
            <person name="Cronin A."/>
            <person name="Davis P."/>
            <person name="Feltwell T."/>
            <person name="Fraser A."/>
            <person name="Gentles S."/>
            <person name="Goble A."/>
            <person name="Hamlin N."/>
            <person name="Harris D.E."/>
            <person name="Hidalgo J."/>
            <person name="Hodgson G."/>
            <person name="Holroyd S."/>
            <person name="Hornsby T."/>
            <person name="Howarth S."/>
            <person name="Huckle E.J."/>
            <person name="Hunt S."/>
            <person name="Jagels K."/>
            <person name="James K.D."/>
            <person name="Jones L."/>
            <person name="Jones M."/>
            <person name="Leather S."/>
            <person name="McDonald S."/>
            <person name="McLean J."/>
            <person name="Mooney P."/>
            <person name="Moule S."/>
            <person name="Mungall K.L."/>
            <person name="Murphy L.D."/>
            <person name="Niblett D."/>
            <person name="Odell C."/>
            <person name="Oliver K."/>
            <person name="O'Neil S."/>
            <person name="Pearson D."/>
            <person name="Quail M.A."/>
            <person name="Rabbinowitsch E."/>
            <person name="Rutherford K.M."/>
            <person name="Rutter S."/>
            <person name="Saunders D."/>
            <person name="Seeger K."/>
            <person name="Sharp S."/>
            <person name="Skelton J."/>
            <person name="Simmonds M.N."/>
            <person name="Squares R."/>
            <person name="Squares S."/>
            <person name="Stevens K."/>
            <person name="Taylor K."/>
            <person name="Taylor R.G."/>
            <person name="Tivey A."/>
            <person name="Walsh S.V."/>
            <person name="Warren T."/>
            <person name="Whitehead S."/>
            <person name="Woodward J.R."/>
            <person name="Volckaert G."/>
            <person name="Aert R."/>
            <person name="Robben J."/>
            <person name="Grymonprez B."/>
            <person name="Weltjens I."/>
            <person name="Vanstreels E."/>
            <person name="Rieger M."/>
            <person name="Schaefer M."/>
            <person name="Mueller-Auer S."/>
            <person name="Gabel C."/>
            <person name="Fuchs M."/>
            <person name="Duesterhoeft A."/>
            <person name="Fritzc C."/>
            <person name="Holzer E."/>
            <person name="Moestl D."/>
            <person name="Hilbert H."/>
            <person name="Borzym K."/>
            <person name="Langer I."/>
            <person name="Beck A."/>
            <person name="Lehrach H."/>
            <person name="Reinhardt R."/>
            <person name="Pohl T.M."/>
            <person name="Eger P."/>
            <person name="Zimmermann W."/>
            <person name="Wedler H."/>
            <person name="Wambutt R."/>
            <person name="Purnelle B."/>
            <person name="Goffeau A."/>
            <person name="Cadieu E."/>
            <person name="Dreano S."/>
            <person name="Gloux S."/>
            <person name="Lelaure V."/>
            <person name="Mottier S."/>
            <person name="Galibert F."/>
            <person name="Aves S.J."/>
            <person name="Xiang Z."/>
            <person name="Hunt C."/>
            <person name="Moore K."/>
            <person name="Hurst S.M."/>
            <person name="Lucas M."/>
            <person name="Rochet M."/>
            <person name="Gaillardin C."/>
            <person name="Tallada V.A."/>
            <person name="Garzon A."/>
            <person name="Thode G."/>
            <person name="Daga R.R."/>
            <person name="Cruzado L."/>
            <person name="Jimenez J."/>
            <person name="Sanchez M."/>
            <person name="del Rey F."/>
            <person name="Benito J."/>
            <person name="Dominguez A."/>
            <person name="Revuelta J.L."/>
            <person name="Moreno S."/>
            <person name="Armstrong J."/>
            <person name="Forsburg S.L."/>
            <person name="Cerutti L."/>
            <person name="Lowe T."/>
            <person name="McCombie W.R."/>
            <person name="Paulsen I."/>
            <person name="Potashkin J."/>
            <person name="Shpakovski G.V."/>
            <person name="Ussery D."/>
            <person name="Barrell B.G."/>
            <person name="Nurse P."/>
        </authorList>
    </citation>
    <scope>NUCLEOTIDE SEQUENCE [LARGE SCALE GENOMIC DNA]</scope>
    <source>
        <strain>972 / ATCC 24843</strain>
    </source>
</reference>
<reference key="2">
    <citation type="journal article" date="2000" name="Genes Cells">
        <title>Large-scale screening of intracellular protein localization in living fission yeast cells by the use of a GFP-fusion genomic DNA library.</title>
        <authorList>
            <person name="Ding D.-Q."/>
            <person name="Tomita Y."/>
            <person name="Yamamoto A."/>
            <person name="Chikashige Y."/>
            <person name="Haraguchi T."/>
            <person name="Hiraoka Y."/>
        </authorList>
    </citation>
    <scope>NUCLEOTIDE SEQUENCE [LARGE SCALE GENOMIC DNA] OF 27-125</scope>
    <source>
        <strain>ATCC 38364 / 968</strain>
    </source>
</reference>
<name>ATPG_SCHPO</name>
<accession>O74754</accession>
<accession>Q9USC2</accession>
<dbReference type="EMBL" id="CU329671">
    <property type="protein sequence ID" value="CAA21307.1"/>
    <property type="molecule type" value="Genomic_DNA"/>
</dbReference>
<dbReference type="EMBL" id="AB027877">
    <property type="protein sequence ID" value="BAA87181.1"/>
    <property type="molecule type" value="Genomic_DNA"/>
</dbReference>
<dbReference type="PIR" id="T39660">
    <property type="entry name" value="T39660"/>
</dbReference>
<dbReference type="RefSeq" id="NP_595430.1">
    <property type="nucleotide sequence ID" value="NM_001021338.2"/>
</dbReference>
<dbReference type="SMR" id="O74754"/>
<dbReference type="BioGRID" id="276388">
    <property type="interactions" value="10"/>
</dbReference>
<dbReference type="ComplexPortal" id="CPX-25764">
    <property type="entry name" value="Mitochondrial proton translocating ATP synthase complex"/>
</dbReference>
<dbReference type="FunCoup" id="O74754">
    <property type="interactions" value="314"/>
</dbReference>
<dbReference type="STRING" id="284812.O74754"/>
<dbReference type="iPTMnet" id="O74754"/>
<dbReference type="PaxDb" id="4896-SPBC1734.13.1"/>
<dbReference type="EnsemblFungi" id="SPBC1734.13.1">
    <property type="protein sequence ID" value="SPBC1734.13.1:pep"/>
    <property type="gene ID" value="SPBC1734.13"/>
</dbReference>
<dbReference type="GeneID" id="2539839"/>
<dbReference type="KEGG" id="spo:2539839"/>
<dbReference type="PomBase" id="SPBC1734.13">
    <property type="gene designation" value="atp3"/>
</dbReference>
<dbReference type="VEuPathDB" id="FungiDB:SPBC1734.13"/>
<dbReference type="eggNOG" id="KOG1531">
    <property type="taxonomic scope" value="Eukaryota"/>
</dbReference>
<dbReference type="HOGENOM" id="CLU_050669_4_1_1"/>
<dbReference type="InParanoid" id="O74754"/>
<dbReference type="OMA" id="MQITSAM"/>
<dbReference type="PhylomeDB" id="O74754"/>
<dbReference type="Reactome" id="R-SPO-9837999">
    <property type="pathway name" value="Mitochondrial protein degradation"/>
</dbReference>
<dbReference type="PRO" id="PR:O74754"/>
<dbReference type="Proteomes" id="UP000002485">
    <property type="component" value="Chromosome II"/>
</dbReference>
<dbReference type="GO" id="GO:0099617">
    <property type="term" value="C:matrix side of mitochondrial inner membrane"/>
    <property type="evidence" value="ECO:0000305"/>
    <property type="project" value="PomBase"/>
</dbReference>
<dbReference type="GO" id="GO:0005739">
    <property type="term" value="C:mitochondrion"/>
    <property type="evidence" value="ECO:0007005"/>
    <property type="project" value="PomBase"/>
</dbReference>
<dbReference type="GO" id="GO:0045259">
    <property type="term" value="C:proton-transporting ATP synthase complex"/>
    <property type="evidence" value="ECO:0000250"/>
    <property type="project" value="PomBase"/>
</dbReference>
<dbReference type="GO" id="GO:0046933">
    <property type="term" value="F:proton-transporting ATP synthase activity, rotational mechanism"/>
    <property type="evidence" value="ECO:0007669"/>
    <property type="project" value="InterPro"/>
</dbReference>
<dbReference type="GO" id="GO:0015986">
    <property type="term" value="P:proton motive force-driven ATP synthesis"/>
    <property type="evidence" value="ECO:0000318"/>
    <property type="project" value="GO_Central"/>
</dbReference>
<dbReference type="GO" id="GO:0042776">
    <property type="term" value="P:proton motive force-driven mitochondrial ATP synthesis"/>
    <property type="evidence" value="ECO:0000250"/>
    <property type="project" value="PomBase"/>
</dbReference>
<dbReference type="CDD" id="cd12151">
    <property type="entry name" value="F1-ATPase_gamma"/>
    <property type="match status" value="1"/>
</dbReference>
<dbReference type="FunFam" id="3.40.1380.10:FF:000003">
    <property type="entry name" value="ATP synthase subunit gamma"/>
    <property type="match status" value="1"/>
</dbReference>
<dbReference type="Gene3D" id="3.40.1380.10">
    <property type="match status" value="1"/>
</dbReference>
<dbReference type="Gene3D" id="1.10.287.80">
    <property type="entry name" value="ATP synthase, gamma subunit, helix hairpin domain"/>
    <property type="match status" value="1"/>
</dbReference>
<dbReference type="InterPro" id="IPR035968">
    <property type="entry name" value="ATP_synth_F1_ATPase_gsu"/>
</dbReference>
<dbReference type="InterPro" id="IPR000131">
    <property type="entry name" value="ATP_synth_F1_gsu"/>
</dbReference>
<dbReference type="InterPro" id="IPR023632">
    <property type="entry name" value="ATP_synth_F1_gsu_CS"/>
</dbReference>
<dbReference type="NCBIfam" id="TIGR01146">
    <property type="entry name" value="ATPsyn_F1gamma"/>
    <property type="match status" value="1"/>
</dbReference>
<dbReference type="PANTHER" id="PTHR11693">
    <property type="entry name" value="ATP SYNTHASE GAMMA CHAIN"/>
    <property type="match status" value="1"/>
</dbReference>
<dbReference type="PANTHER" id="PTHR11693:SF22">
    <property type="entry name" value="ATP SYNTHASE SUBUNIT GAMMA, MITOCHONDRIAL"/>
    <property type="match status" value="1"/>
</dbReference>
<dbReference type="Pfam" id="PF00231">
    <property type="entry name" value="ATP-synt"/>
    <property type="match status" value="1"/>
</dbReference>
<dbReference type="PIRSF" id="PIRSF039089">
    <property type="entry name" value="ATP_synthase_gamma"/>
    <property type="match status" value="1"/>
</dbReference>
<dbReference type="PRINTS" id="PR00126">
    <property type="entry name" value="ATPASEGAMMA"/>
</dbReference>
<dbReference type="SUPFAM" id="SSF52943">
    <property type="entry name" value="ATP synthase (F1-ATPase), gamma subunit"/>
    <property type="match status" value="1"/>
</dbReference>
<dbReference type="PROSITE" id="PS00153">
    <property type="entry name" value="ATPASE_GAMMA"/>
    <property type="match status" value="1"/>
</dbReference>
<evidence type="ECO:0000250" key="1"/>
<evidence type="ECO:0000255" key="2"/>
<evidence type="ECO:0000305" key="3"/>
<keyword id="KW-0066">ATP synthesis</keyword>
<keyword id="KW-0139">CF(1)</keyword>
<keyword id="KW-0375">Hydrogen ion transport</keyword>
<keyword id="KW-0406">Ion transport</keyword>
<keyword id="KW-0472">Membrane</keyword>
<keyword id="KW-0496">Mitochondrion</keyword>
<keyword id="KW-0999">Mitochondrion inner membrane</keyword>
<keyword id="KW-1185">Reference proteome</keyword>
<keyword id="KW-0809">Transit peptide</keyword>
<keyword id="KW-0813">Transport</keyword>
<proteinExistence type="inferred from homology"/>
<organism>
    <name type="scientific">Schizosaccharomyces pombe (strain 972 / ATCC 24843)</name>
    <name type="common">Fission yeast</name>
    <dbReference type="NCBI Taxonomy" id="284812"/>
    <lineage>
        <taxon>Eukaryota</taxon>
        <taxon>Fungi</taxon>
        <taxon>Dikarya</taxon>
        <taxon>Ascomycota</taxon>
        <taxon>Taphrinomycotina</taxon>
        <taxon>Schizosaccharomycetes</taxon>
        <taxon>Schizosaccharomycetales</taxon>
        <taxon>Schizosaccharomycetaceae</taxon>
        <taxon>Schizosaccharomyces</taxon>
    </lineage>
</organism>
<gene>
    <name type="primary">atp3</name>
    <name type="ORF">SPBC1734.13</name>
</gene>
<sequence>MLRQTLTQASRMRPCISVVGFRGFHASSPCEATLKEIEQRLKSIKNIEKITKTIKTVAQTKLTRAQRAMEASNKYYRVSDEVFKEAGTKAPEEGKTLMVACSSDKGLCGGIHSSISRLIRRELHDPKTFENTSLCILGEKVRTQLLRFCPESFYLTFAHIGGASPSFEEALQISSNILEHAKDYDRIVLVYNKFASAVSFETVMKNLYTTKAINESPNLSAYEVSDEVHQPLMEFAFANAIFSAMAEAHCSEMSSRRNAMENASKSAGDMINKFSIQYNRQRQASITNELIDIVTGANSLA</sequence>